<sequence length="72" mass="8191">MAKEDSIEMQGTILETLPNTMFRVELENGHVVIAHISGKMRKNYIRILTGDKVTVALTPYDLSKGRIVFRSR</sequence>
<reference key="1">
    <citation type="journal article" date="2006" name="J. Bacteriol.">
        <title>Genome sequence of Aeromonas hydrophila ATCC 7966T: jack of all trades.</title>
        <authorList>
            <person name="Seshadri R."/>
            <person name="Joseph S.W."/>
            <person name="Chopra A.K."/>
            <person name="Sha J."/>
            <person name="Shaw J."/>
            <person name="Graf J."/>
            <person name="Haft D.H."/>
            <person name="Wu M."/>
            <person name="Ren Q."/>
            <person name="Rosovitz M.J."/>
            <person name="Madupu R."/>
            <person name="Tallon L."/>
            <person name="Kim M."/>
            <person name="Jin S."/>
            <person name="Vuong H."/>
            <person name="Stine O.C."/>
            <person name="Ali A."/>
            <person name="Horneman A.J."/>
            <person name="Heidelberg J.F."/>
        </authorList>
    </citation>
    <scope>NUCLEOTIDE SEQUENCE [LARGE SCALE GENOMIC DNA]</scope>
    <source>
        <strain>ATCC 7966 / DSM 30187 / BCRC 13018 / CCUG 14551 / JCM 1027 / KCTC 2358 / NCIMB 9240 / NCTC 8049</strain>
    </source>
</reference>
<organism>
    <name type="scientific">Aeromonas hydrophila subsp. hydrophila (strain ATCC 7966 / DSM 30187 / BCRC 13018 / CCUG 14551 / JCM 1027 / KCTC 2358 / NCIMB 9240 / NCTC 8049)</name>
    <dbReference type="NCBI Taxonomy" id="380703"/>
    <lineage>
        <taxon>Bacteria</taxon>
        <taxon>Pseudomonadati</taxon>
        <taxon>Pseudomonadota</taxon>
        <taxon>Gammaproteobacteria</taxon>
        <taxon>Aeromonadales</taxon>
        <taxon>Aeromonadaceae</taxon>
        <taxon>Aeromonas</taxon>
    </lineage>
</organism>
<feature type="chain" id="PRO_0000338754" description="Translation initiation factor IF-1">
    <location>
        <begin position="1"/>
        <end position="72"/>
    </location>
</feature>
<feature type="domain" description="S1-like" evidence="1">
    <location>
        <begin position="1"/>
        <end position="72"/>
    </location>
</feature>
<accession>A0KJD8</accession>
<comment type="function">
    <text evidence="1">One of the essential components for the initiation of protein synthesis. Stabilizes the binding of IF-2 and IF-3 on the 30S subunit to which N-formylmethionyl-tRNA(fMet) subsequently binds. Helps modulate mRNA selection, yielding the 30S pre-initiation complex (PIC). Upon addition of the 50S ribosomal subunit IF-1, IF-2 and IF-3 are released leaving the mature 70S translation initiation complex.</text>
</comment>
<comment type="subunit">
    <text evidence="1">Component of the 30S ribosomal translation pre-initiation complex which assembles on the 30S ribosome in the order IF-2 and IF-3, IF-1 and N-formylmethionyl-tRNA(fMet); mRNA recruitment can occur at any time during PIC assembly.</text>
</comment>
<comment type="subcellular location">
    <subcellularLocation>
        <location evidence="1">Cytoplasm</location>
    </subcellularLocation>
</comment>
<comment type="similarity">
    <text evidence="1">Belongs to the IF-1 family.</text>
</comment>
<comment type="sequence caution" evidence="2">
    <conflict type="erroneous initiation">
        <sequence resource="EMBL-CDS" id="ABK39436"/>
    </conflict>
    <text>Extended N-terminus.</text>
</comment>
<protein>
    <recommendedName>
        <fullName evidence="1">Translation initiation factor IF-1</fullName>
    </recommendedName>
</protein>
<gene>
    <name evidence="1" type="primary">infA</name>
    <name type="ordered locus">AHA_1858</name>
</gene>
<dbReference type="EMBL" id="CP000462">
    <property type="protein sequence ID" value="ABK39436.1"/>
    <property type="status" value="ALT_INIT"/>
    <property type="molecule type" value="Genomic_DNA"/>
</dbReference>
<dbReference type="RefSeq" id="WP_005300033.1">
    <property type="nucleotide sequence ID" value="NC_008570.1"/>
</dbReference>
<dbReference type="RefSeq" id="YP_856389.1">
    <property type="nucleotide sequence ID" value="NC_008570.1"/>
</dbReference>
<dbReference type="SMR" id="A0KJD8"/>
<dbReference type="STRING" id="380703.AHA_1858"/>
<dbReference type="EnsemblBacteria" id="ABK39436">
    <property type="protein sequence ID" value="ABK39436"/>
    <property type="gene ID" value="AHA_1858"/>
</dbReference>
<dbReference type="GeneID" id="97856495"/>
<dbReference type="KEGG" id="aha:AHA_1858"/>
<dbReference type="PATRIC" id="fig|380703.7.peg.1868"/>
<dbReference type="eggNOG" id="COG0361">
    <property type="taxonomic scope" value="Bacteria"/>
</dbReference>
<dbReference type="HOGENOM" id="CLU_151267_1_0_6"/>
<dbReference type="OrthoDB" id="9803250at2"/>
<dbReference type="Proteomes" id="UP000000756">
    <property type="component" value="Chromosome"/>
</dbReference>
<dbReference type="GO" id="GO:0005829">
    <property type="term" value="C:cytosol"/>
    <property type="evidence" value="ECO:0007669"/>
    <property type="project" value="TreeGrafter"/>
</dbReference>
<dbReference type="GO" id="GO:0043022">
    <property type="term" value="F:ribosome binding"/>
    <property type="evidence" value="ECO:0007669"/>
    <property type="project" value="UniProtKB-UniRule"/>
</dbReference>
<dbReference type="GO" id="GO:0019843">
    <property type="term" value="F:rRNA binding"/>
    <property type="evidence" value="ECO:0007669"/>
    <property type="project" value="UniProtKB-UniRule"/>
</dbReference>
<dbReference type="GO" id="GO:0003743">
    <property type="term" value="F:translation initiation factor activity"/>
    <property type="evidence" value="ECO:0007669"/>
    <property type="project" value="UniProtKB-UniRule"/>
</dbReference>
<dbReference type="CDD" id="cd04451">
    <property type="entry name" value="S1_IF1"/>
    <property type="match status" value="1"/>
</dbReference>
<dbReference type="FunFam" id="2.40.50.140:FF:000002">
    <property type="entry name" value="Translation initiation factor IF-1"/>
    <property type="match status" value="1"/>
</dbReference>
<dbReference type="Gene3D" id="2.40.50.140">
    <property type="entry name" value="Nucleic acid-binding proteins"/>
    <property type="match status" value="1"/>
</dbReference>
<dbReference type="HAMAP" id="MF_00075">
    <property type="entry name" value="IF_1"/>
    <property type="match status" value="1"/>
</dbReference>
<dbReference type="InterPro" id="IPR012340">
    <property type="entry name" value="NA-bd_OB-fold"/>
</dbReference>
<dbReference type="InterPro" id="IPR006196">
    <property type="entry name" value="RNA-binding_domain_S1_IF1"/>
</dbReference>
<dbReference type="InterPro" id="IPR003029">
    <property type="entry name" value="S1_domain"/>
</dbReference>
<dbReference type="InterPro" id="IPR004368">
    <property type="entry name" value="TIF_IF1"/>
</dbReference>
<dbReference type="NCBIfam" id="TIGR00008">
    <property type="entry name" value="infA"/>
    <property type="match status" value="1"/>
</dbReference>
<dbReference type="PANTHER" id="PTHR33370">
    <property type="entry name" value="TRANSLATION INITIATION FACTOR IF-1, CHLOROPLASTIC"/>
    <property type="match status" value="1"/>
</dbReference>
<dbReference type="PANTHER" id="PTHR33370:SF1">
    <property type="entry name" value="TRANSLATION INITIATION FACTOR IF-1, CHLOROPLASTIC"/>
    <property type="match status" value="1"/>
</dbReference>
<dbReference type="Pfam" id="PF01176">
    <property type="entry name" value="eIF-1a"/>
    <property type="match status" value="1"/>
</dbReference>
<dbReference type="SMART" id="SM00316">
    <property type="entry name" value="S1"/>
    <property type="match status" value="1"/>
</dbReference>
<dbReference type="SUPFAM" id="SSF50249">
    <property type="entry name" value="Nucleic acid-binding proteins"/>
    <property type="match status" value="1"/>
</dbReference>
<dbReference type="PROSITE" id="PS50832">
    <property type="entry name" value="S1_IF1_TYPE"/>
    <property type="match status" value="1"/>
</dbReference>
<evidence type="ECO:0000255" key="1">
    <source>
        <dbReference type="HAMAP-Rule" id="MF_00075"/>
    </source>
</evidence>
<evidence type="ECO:0000305" key="2"/>
<keyword id="KW-0963">Cytoplasm</keyword>
<keyword id="KW-0396">Initiation factor</keyword>
<keyword id="KW-0648">Protein biosynthesis</keyword>
<keyword id="KW-1185">Reference proteome</keyword>
<keyword id="KW-0694">RNA-binding</keyword>
<keyword id="KW-0699">rRNA-binding</keyword>
<name>IF1_AERHH</name>
<proteinExistence type="inferred from homology"/>